<organism>
    <name type="scientific">Pestalotiopsis fici (strain W106-1 / CGMCC3.15140)</name>
    <dbReference type="NCBI Taxonomy" id="1229662"/>
    <lineage>
        <taxon>Eukaryota</taxon>
        <taxon>Fungi</taxon>
        <taxon>Dikarya</taxon>
        <taxon>Ascomycota</taxon>
        <taxon>Pezizomycotina</taxon>
        <taxon>Sordariomycetes</taxon>
        <taxon>Xylariomycetidae</taxon>
        <taxon>Amphisphaeriales</taxon>
        <taxon>Sporocadaceae</taxon>
        <taxon>Pestalotiopsis</taxon>
    </lineage>
</organism>
<gene>
    <name type="ORF">PFICI_06862</name>
</gene>
<reference key="1">
    <citation type="journal article" date="2015" name="BMC Genomics">
        <title>Genomic and transcriptomic analysis of the endophytic fungus Pestalotiopsis fici reveals its lifestyle and high potential for synthesis of natural products.</title>
        <authorList>
            <person name="Wang X."/>
            <person name="Zhang X."/>
            <person name="Liu L."/>
            <person name="Xiang M."/>
            <person name="Wang W."/>
            <person name="Sun X."/>
            <person name="Che Y."/>
            <person name="Guo L."/>
            <person name="Liu G."/>
            <person name="Guo L."/>
            <person name="Wang C."/>
            <person name="Yin W.B."/>
            <person name="Stadler M."/>
            <person name="Zhang X."/>
            <person name="Liu X."/>
        </authorList>
    </citation>
    <scope>NUCLEOTIDE SEQUENCE [LARGE SCALE GENOMIC DNA]</scope>
    <source>
        <strain>W106-1 / CGMCC3.15140</strain>
    </source>
</reference>
<reference key="2">
    <citation type="journal article" date="2017" name="Mol. Microbiol.">
        <title>A cryptic pigment biosynthetic pathway uncovered by heterologous expression is essential for conidial development in Pestalotiopsis fici.</title>
        <authorList>
            <person name="Zhang P."/>
            <person name="Wang X."/>
            <person name="Fan A."/>
            <person name="Zheng Y."/>
            <person name="Liu X."/>
            <person name="Wang S."/>
            <person name="Zou H."/>
            <person name="Oakley B.R."/>
            <person name="Keller N.P."/>
            <person name="Yin W.B."/>
        </authorList>
    </citation>
    <scope>FUNCTION</scope>
    <scope>PATHWAY</scope>
</reference>
<reference key="3">
    <citation type="journal article" date="2019" name="Mol. Microbiol.">
        <title>Two transcription factors cooperatively regulate DHN melanin biosynthesis and development in Pestalotiopsis fici.</title>
        <authorList>
            <person name="Zhang P."/>
            <person name="Zhou S."/>
            <person name="Wang G."/>
            <person name="An Z."/>
            <person name="Liu X."/>
            <person name="Li K."/>
            <person name="Yin W.B."/>
        </authorList>
    </citation>
    <scope>FUNCTION</scope>
</reference>
<accession>W3X732</accession>
<sequence length="592" mass="66213">MYIQTQFASLLLLAGTSLASQVRKYNFTITSQWSSGDGHGRPVFMINGQSPGPLIEADEGDEIEVFVDNQLAAETTMHWHGIYQIDRPWNDGVPGVTQYSMQPRDTYTYRFTVQQQYGSYFYHGHFGPAFADGMRGPMWIAPAAWRPRPYELISDSSHDVEQMKKAEKHPFHVVISDWNAEPMDILLVMYRDTGIVPWCSNSIVLNGKGRTYCHSAELIESVGGPGRNTLGCLMQPDQELYSNEQVCEATQTDLEIFQAEEGHEWIWINFIHSGAHHELQISVDEHEIVVVAADGEFTYPQRVHAANCNLGERISILVHLNQKPGDYAIRVTSLRQEQVIQGLGILRYPGSSHGAQEAEPPATKPWVHLNGTLISDKLQQMDEMKLAPFPSRPPPPQSDHTLKFFVNMTGTGSWALNIGPHQAFRQQLPPLLWEEDSRGVTTYESDVQGGSMQNGSVVDIIFTNGANVNSQHPFHKHNNKAWVIGTGTGGFPWDTVDEAIQQGGMADSFNFVDPPIRDGCRLGNTTGDWTVIRYDIAFPAASMLHCHMIHHFGAGQQVVLLEGVESMAKIPAEMKDRVHSNFRPPLRYGPLD</sequence>
<dbReference type="EC" id="1.10.3.-" evidence="9"/>
<dbReference type="EMBL" id="KI912112">
    <property type="protein sequence ID" value="ETS81860.1"/>
    <property type="molecule type" value="Genomic_DNA"/>
</dbReference>
<dbReference type="RefSeq" id="XP_007833634.1">
    <property type="nucleotide sequence ID" value="XM_007835443.1"/>
</dbReference>
<dbReference type="SMR" id="W3X732"/>
<dbReference type="STRING" id="1229662.W3X732"/>
<dbReference type="GeneID" id="19271875"/>
<dbReference type="KEGG" id="pfy:PFICI_06862"/>
<dbReference type="eggNOG" id="KOG1263">
    <property type="taxonomic scope" value="Eukaryota"/>
</dbReference>
<dbReference type="HOGENOM" id="CLU_006504_5_4_1"/>
<dbReference type="InParanoid" id="W3X732"/>
<dbReference type="OMA" id="WCSNSIV"/>
<dbReference type="OrthoDB" id="2121828at2759"/>
<dbReference type="UniPathway" id="UPA00785"/>
<dbReference type="Proteomes" id="UP000030651">
    <property type="component" value="Unassembled WGS sequence"/>
</dbReference>
<dbReference type="GO" id="GO:0009986">
    <property type="term" value="C:cell surface"/>
    <property type="evidence" value="ECO:0007669"/>
    <property type="project" value="UniProtKB-SubCell"/>
</dbReference>
<dbReference type="GO" id="GO:0005507">
    <property type="term" value="F:copper ion binding"/>
    <property type="evidence" value="ECO:0007669"/>
    <property type="project" value="InterPro"/>
</dbReference>
<dbReference type="GO" id="GO:0016491">
    <property type="term" value="F:oxidoreductase activity"/>
    <property type="evidence" value="ECO:0007669"/>
    <property type="project" value="UniProtKB-KW"/>
</dbReference>
<dbReference type="GO" id="GO:0042438">
    <property type="term" value="P:melanin biosynthetic process"/>
    <property type="evidence" value="ECO:0007669"/>
    <property type="project" value="UniProtKB-UniPathway"/>
</dbReference>
<dbReference type="CDD" id="cd13850">
    <property type="entry name" value="CuRO_1_Abr2_like"/>
    <property type="match status" value="1"/>
</dbReference>
<dbReference type="CDD" id="cd13876">
    <property type="entry name" value="CuRO_2_Abr2_like"/>
    <property type="match status" value="1"/>
</dbReference>
<dbReference type="Gene3D" id="2.60.40.420">
    <property type="entry name" value="Cupredoxins - blue copper proteins"/>
    <property type="match status" value="3"/>
</dbReference>
<dbReference type="InterPro" id="IPR011707">
    <property type="entry name" value="Cu-oxidase-like_N"/>
</dbReference>
<dbReference type="InterPro" id="IPR001117">
    <property type="entry name" value="Cu-oxidase_2nd"/>
</dbReference>
<dbReference type="InterPro" id="IPR011706">
    <property type="entry name" value="Cu-oxidase_C"/>
</dbReference>
<dbReference type="InterPro" id="IPR045087">
    <property type="entry name" value="Cu-oxidase_fam"/>
</dbReference>
<dbReference type="InterPro" id="IPR008972">
    <property type="entry name" value="Cupredoxin"/>
</dbReference>
<dbReference type="PANTHER" id="PTHR11709:SF488">
    <property type="entry name" value="LACCASE-RELATED"/>
    <property type="match status" value="1"/>
</dbReference>
<dbReference type="PANTHER" id="PTHR11709">
    <property type="entry name" value="MULTI-COPPER OXIDASE"/>
    <property type="match status" value="1"/>
</dbReference>
<dbReference type="Pfam" id="PF00394">
    <property type="entry name" value="Cu-oxidase"/>
    <property type="match status" value="1"/>
</dbReference>
<dbReference type="Pfam" id="PF07731">
    <property type="entry name" value="Cu-oxidase_2"/>
    <property type="match status" value="1"/>
</dbReference>
<dbReference type="Pfam" id="PF07732">
    <property type="entry name" value="Cu-oxidase_3"/>
    <property type="match status" value="1"/>
</dbReference>
<dbReference type="SUPFAM" id="SSF49503">
    <property type="entry name" value="Cupredoxins"/>
    <property type="match status" value="3"/>
</dbReference>
<dbReference type="PROSITE" id="PS00079">
    <property type="entry name" value="MULTICOPPER_OXIDASE1"/>
    <property type="match status" value="1"/>
</dbReference>
<protein>
    <recommendedName>
        <fullName evidence="7">Laccase PFICI_06862</fullName>
        <ecNumber evidence="9">1.10.3.-</ecNumber>
    </recommendedName>
    <alternativeName>
        <fullName evidence="8">Conidial pigment biosynthesis oxidase PFICI_06862</fullName>
    </alternativeName>
</protein>
<comment type="function">
    <text evidence="5 6 9 10">Laccase involved the biosynthesis of dihydroxynaphthalene (DHN)-melanin, a bluish-green pigment forming a dark layer in the conidial wall that protects the conidia from UV radiations (PubMed:28517364). The first step of the pathway is the production of the pentaketide 1,3,6,8-tetrahydroxynaphthalene (1,3,6,8-THN or T4HN) by the polyketide synthase PfmaE though condensation of acetyl-CoA with malonyl-CoA. T4HN is not stable and easily oxidizes into the stable form flaviolin (PubMed:28517364). T4HN is also substrate of the hydroxynaphthalene reductase PfmaG to yield scytalone (PubMed:28517364). The scytalone dehydratase PfmaJ then reduces scytalone to 1,3,8-THN (PubMed:31116900). 1,3,8-THN is then substrate of the hydroxynaphthalene reductase PfmaI to yield vermelone (Probable). Vermelone is further converted by the multicopper oxidase PfmaD to 1,8-DHN (Probable). Finally the laccase PFICI_06862 transforms 1,8-DHN to DHN-melanin (Probable). The roles of the 5-oxoprolinase PfmaA and the proline iminopeptidase PfmaB within the cluster have not been elucidated yet (Probable).</text>
</comment>
<comment type="pathway">
    <text evidence="9">Pigment biosynthesis; melanin biosynthesis.</text>
</comment>
<comment type="subcellular location">
    <subcellularLocation>
        <location evidence="1">Cell surface</location>
    </subcellularLocation>
</comment>
<comment type="similarity">
    <text evidence="8">Belongs to the multicopper oxidase family.</text>
</comment>
<keyword id="KW-0186">Copper</keyword>
<keyword id="KW-0325">Glycoprotein</keyword>
<keyword id="KW-0470">Melanin biosynthesis</keyword>
<keyword id="KW-0479">Metal-binding</keyword>
<keyword id="KW-0560">Oxidoreductase</keyword>
<keyword id="KW-1185">Reference proteome</keyword>
<keyword id="KW-0677">Repeat</keyword>
<keyword id="KW-0732">Signal</keyword>
<evidence type="ECO:0000250" key="1">
    <source>
        <dbReference type="UniProtKB" id="E9RBR0"/>
    </source>
</evidence>
<evidence type="ECO:0000250" key="2">
    <source>
        <dbReference type="UniProtKB" id="Q70KY3"/>
    </source>
</evidence>
<evidence type="ECO:0000255" key="3"/>
<evidence type="ECO:0000255" key="4">
    <source>
        <dbReference type="PROSITE-ProRule" id="PRU00498"/>
    </source>
</evidence>
<evidence type="ECO:0000269" key="5">
    <source>
    </source>
</evidence>
<evidence type="ECO:0000269" key="6">
    <source>
    </source>
</evidence>
<evidence type="ECO:0000303" key="7">
    <source>
    </source>
</evidence>
<evidence type="ECO:0000305" key="8"/>
<evidence type="ECO:0000305" key="9">
    <source>
    </source>
</evidence>
<evidence type="ECO:0000305" key="10">
    <source>
    </source>
</evidence>
<name>PFMAY_PESFW</name>
<feature type="signal peptide" evidence="3">
    <location>
        <begin position="1"/>
        <end position="19"/>
    </location>
</feature>
<feature type="chain" id="PRO_5004834745" description="Laccase PFICI_06862" evidence="3">
    <location>
        <begin position="20"/>
        <end position="592"/>
    </location>
</feature>
<feature type="domain" description="Plastocyanin-like 1" evidence="3">
    <location>
        <begin position="32"/>
        <end position="142"/>
    </location>
</feature>
<feature type="domain" description="Plastocyanin-like 2" evidence="3">
    <location>
        <begin position="173"/>
        <end position="350"/>
    </location>
</feature>
<feature type="domain" description="Plastocyanin-like 3" evidence="3">
    <location>
        <begin position="445"/>
        <end position="563"/>
    </location>
</feature>
<feature type="binding site" evidence="2">
    <location>
        <position position="78"/>
    </location>
    <ligand>
        <name>Cu cation</name>
        <dbReference type="ChEBI" id="CHEBI:23378"/>
        <label>1</label>
    </ligand>
</feature>
<feature type="binding site" evidence="2">
    <location>
        <position position="80"/>
    </location>
    <ligand>
        <name>Cu cation</name>
        <dbReference type="ChEBI" id="CHEBI:23378"/>
        <label>2</label>
    </ligand>
</feature>
<feature type="binding site" evidence="2">
    <location>
        <position position="123"/>
    </location>
    <ligand>
        <name>Cu cation</name>
        <dbReference type="ChEBI" id="CHEBI:23378"/>
        <label>2</label>
    </ligand>
</feature>
<feature type="binding site" evidence="2">
    <location>
        <position position="125"/>
    </location>
    <ligand>
        <name>Cu cation</name>
        <dbReference type="ChEBI" id="CHEBI:23378"/>
        <label>3</label>
    </ligand>
</feature>
<feature type="binding site" evidence="2">
    <location>
        <position position="475"/>
    </location>
    <ligand>
        <name>Cu cation</name>
        <dbReference type="ChEBI" id="CHEBI:23378"/>
        <label>4</label>
    </ligand>
</feature>
<feature type="glycosylation site" description="N-linked (GlcNAc...) asparagine" evidence="4">
    <location>
        <position position="26"/>
    </location>
</feature>
<feature type="glycosylation site" description="N-linked (GlcNAc...) asparagine" evidence="4">
    <location>
        <position position="370"/>
    </location>
</feature>
<feature type="glycosylation site" description="N-linked (GlcNAc...) asparagine" evidence="4">
    <location>
        <position position="407"/>
    </location>
</feature>
<feature type="glycosylation site" description="N-linked (GlcNAc...) asparagine" evidence="4">
    <location>
        <position position="454"/>
    </location>
</feature>
<feature type="glycosylation site" description="N-linked (GlcNAc...) asparagine" evidence="4">
    <location>
        <position position="524"/>
    </location>
</feature>
<proteinExistence type="inferred from homology"/>